<evidence type="ECO:0000255" key="1">
    <source>
        <dbReference type="HAMAP-Rule" id="MF_01682"/>
    </source>
</evidence>
<evidence type="ECO:0000305" key="2"/>
<comment type="function">
    <text evidence="1">Catalyzes 2 different reactions between oxygen and the acireductone 1,2-dihydroxy-3-keto-5-methylthiopentene (DHK-MTPene) depending upon the metal bound in the active site. Fe-containing acireductone dioxygenase (Fe-ARD) produces formate and 2-keto-4-methylthiobutyrate (KMTB), the alpha-ketoacid precursor of methionine in the methionine recycle pathway. Ni-containing acireductone dioxygenase (Ni-ARD) produces methylthiopropionate, carbon monoxide and formate, and does not lie on the methionine recycle pathway.</text>
</comment>
<comment type="catalytic activity">
    <reaction evidence="1">
        <text>1,2-dihydroxy-5-(methylsulfanyl)pent-1-en-3-one + O2 = 3-(methylsulfanyl)propanoate + CO + formate + 2 H(+)</text>
        <dbReference type="Rhea" id="RHEA:14161"/>
        <dbReference type="ChEBI" id="CHEBI:15378"/>
        <dbReference type="ChEBI" id="CHEBI:15379"/>
        <dbReference type="ChEBI" id="CHEBI:15740"/>
        <dbReference type="ChEBI" id="CHEBI:17245"/>
        <dbReference type="ChEBI" id="CHEBI:49016"/>
        <dbReference type="ChEBI" id="CHEBI:49252"/>
        <dbReference type="EC" id="1.13.11.53"/>
    </reaction>
</comment>
<comment type="catalytic activity">
    <reaction evidence="1">
        <text>1,2-dihydroxy-5-(methylsulfanyl)pent-1-en-3-one + O2 = 4-methylsulfanyl-2-oxobutanoate + formate + 2 H(+)</text>
        <dbReference type="Rhea" id="RHEA:24504"/>
        <dbReference type="ChEBI" id="CHEBI:15378"/>
        <dbReference type="ChEBI" id="CHEBI:15379"/>
        <dbReference type="ChEBI" id="CHEBI:15740"/>
        <dbReference type="ChEBI" id="CHEBI:16723"/>
        <dbReference type="ChEBI" id="CHEBI:49252"/>
        <dbReference type="EC" id="1.13.11.54"/>
    </reaction>
</comment>
<comment type="cofactor">
    <cofactor evidence="1">
        <name>Fe(2+)</name>
        <dbReference type="ChEBI" id="CHEBI:29033"/>
    </cofactor>
    <text evidence="1">Binds 1 Fe(2+) cation per monomer.</text>
</comment>
<comment type="cofactor">
    <cofactor evidence="1">
        <name>Ni(2+)</name>
        <dbReference type="ChEBI" id="CHEBI:49786"/>
    </cofactor>
    <text evidence="1">Binds 1 nickel ion per monomer.</text>
</comment>
<comment type="pathway">
    <text evidence="1">Amino-acid biosynthesis; L-methionine biosynthesis via salvage pathway; L-methionine from S-methyl-5-thio-alpha-D-ribose 1-phosphate: step 5/6.</text>
</comment>
<comment type="subunit">
    <text evidence="1">Monomer.</text>
</comment>
<comment type="similarity">
    <text evidence="1">Belongs to the acireductone dioxygenase (ARD) family.</text>
</comment>
<comment type="sequence caution" evidence="2">
    <conflict type="frameshift">
        <sequence resource="EMBL-CDS" id="ABB56640"/>
    </conflict>
</comment>
<accession>Q31QM9</accession>
<accession>Q8VPV0</accession>
<sequence length="198" mass="22350">MTVLTIYREDLPEQPLTQTTDAAEIAALLAQQGLRFERWPAQVELADDATPEQILAAYATEVDRVKTEGGYITVDAVSLRPDHPDRAALRQKFLAEHIHSEDEVRFFVAGQGLFSLHLGDHVYALLCTQNDWISVPAGTRHWFDMGSQPYFTALRFFNNPRRLGRSVYRQRHRQSVPAPALNSGSERDNFILSLALAC</sequence>
<name>MTND_SYNE7</name>
<keyword id="KW-0028">Amino-acid biosynthesis</keyword>
<keyword id="KW-0223">Dioxygenase</keyword>
<keyword id="KW-0408">Iron</keyword>
<keyword id="KW-0479">Metal-binding</keyword>
<keyword id="KW-0486">Methionine biosynthesis</keyword>
<keyword id="KW-0533">Nickel</keyword>
<keyword id="KW-0560">Oxidoreductase</keyword>
<keyword id="KW-1185">Reference proteome</keyword>
<organism>
    <name type="scientific">Synechococcus elongatus (strain ATCC 33912 / PCC 7942 / FACHB-805)</name>
    <name type="common">Anacystis nidulans R2</name>
    <dbReference type="NCBI Taxonomy" id="1140"/>
    <lineage>
        <taxon>Bacteria</taxon>
        <taxon>Bacillati</taxon>
        <taxon>Cyanobacteriota</taxon>
        <taxon>Cyanophyceae</taxon>
        <taxon>Synechococcales</taxon>
        <taxon>Synechococcaceae</taxon>
        <taxon>Synechococcus</taxon>
    </lineage>
</organism>
<feature type="chain" id="PRO_0000359236" description="Acireductone dioxygenase">
    <location>
        <begin position="1"/>
        <end position="198"/>
    </location>
</feature>
<feature type="binding site" evidence="1">
    <location>
        <position position="97"/>
    </location>
    <ligand>
        <name>Fe(2+)</name>
        <dbReference type="ChEBI" id="CHEBI:29033"/>
    </ligand>
</feature>
<feature type="binding site" evidence="1">
    <location>
        <position position="97"/>
    </location>
    <ligand>
        <name>Ni(2+)</name>
        <dbReference type="ChEBI" id="CHEBI:49786"/>
    </ligand>
</feature>
<feature type="binding site" evidence="1">
    <location>
        <position position="99"/>
    </location>
    <ligand>
        <name>Fe(2+)</name>
        <dbReference type="ChEBI" id="CHEBI:29033"/>
    </ligand>
</feature>
<feature type="binding site" evidence="1">
    <location>
        <position position="99"/>
    </location>
    <ligand>
        <name>Ni(2+)</name>
        <dbReference type="ChEBI" id="CHEBI:49786"/>
    </ligand>
</feature>
<feature type="binding site" evidence="1">
    <location>
        <position position="103"/>
    </location>
    <ligand>
        <name>Fe(2+)</name>
        <dbReference type="ChEBI" id="CHEBI:29033"/>
    </ligand>
</feature>
<feature type="binding site" evidence="1">
    <location>
        <position position="103"/>
    </location>
    <ligand>
        <name>Ni(2+)</name>
        <dbReference type="ChEBI" id="CHEBI:49786"/>
    </ligand>
</feature>
<feature type="binding site" evidence="1">
    <location>
        <position position="141"/>
    </location>
    <ligand>
        <name>Fe(2+)</name>
        <dbReference type="ChEBI" id="CHEBI:29033"/>
    </ligand>
</feature>
<feature type="binding site" evidence="1">
    <location>
        <position position="141"/>
    </location>
    <ligand>
        <name>Ni(2+)</name>
        <dbReference type="ChEBI" id="CHEBI:49786"/>
    </ligand>
</feature>
<feature type="site" description="May play a role in metal incorporation in vivo" evidence="1">
    <location>
        <position position="96"/>
    </location>
</feature>
<feature type="site" description="May play a role in transmitting local conformational changes" evidence="1">
    <location>
        <position position="102"/>
    </location>
</feature>
<feature type="site" description="Important to generate the dianion" evidence="1">
    <location>
        <position position="105"/>
    </location>
</feature>
<proteinExistence type="inferred from homology"/>
<dbReference type="EC" id="1.13.11.54" evidence="1"/>
<dbReference type="EC" id="1.13.11.53" evidence="1"/>
<dbReference type="EMBL" id="AY029340">
    <property type="protein sequence ID" value="AAK40243.1"/>
    <property type="molecule type" value="Genomic_DNA"/>
</dbReference>
<dbReference type="EMBL" id="CP000100">
    <property type="protein sequence ID" value="ABB56640.1"/>
    <property type="status" value="ALT_FRAME"/>
    <property type="molecule type" value="Genomic_DNA"/>
</dbReference>
<dbReference type="SMR" id="Q31QM9"/>
<dbReference type="STRING" id="1140.Synpcc7942_0608"/>
<dbReference type="PaxDb" id="1140-Synpcc7942_0608"/>
<dbReference type="KEGG" id="syf:Synpcc7942_0608"/>
<dbReference type="eggNOG" id="COG1791">
    <property type="taxonomic scope" value="Bacteria"/>
</dbReference>
<dbReference type="HOGENOM" id="CLU_125400_0_0_3"/>
<dbReference type="BioCyc" id="SYNEL:SYNPCC7942_0608-MONOMER"/>
<dbReference type="UniPathway" id="UPA00904">
    <property type="reaction ID" value="UER00878"/>
</dbReference>
<dbReference type="Proteomes" id="UP000889800">
    <property type="component" value="Chromosome"/>
</dbReference>
<dbReference type="GO" id="GO:0010308">
    <property type="term" value="F:acireductone dioxygenase (Ni2+-requiring) activity"/>
    <property type="evidence" value="ECO:0007669"/>
    <property type="project" value="UniProtKB-UniRule"/>
</dbReference>
<dbReference type="GO" id="GO:0010309">
    <property type="term" value="F:acireductone dioxygenase [iron(II)-requiring] activity"/>
    <property type="evidence" value="ECO:0007669"/>
    <property type="project" value="UniProtKB-UniRule"/>
</dbReference>
<dbReference type="GO" id="GO:0005506">
    <property type="term" value="F:iron ion binding"/>
    <property type="evidence" value="ECO:0007669"/>
    <property type="project" value="UniProtKB-UniRule"/>
</dbReference>
<dbReference type="GO" id="GO:0016151">
    <property type="term" value="F:nickel cation binding"/>
    <property type="evidence" value="ECO:0007669"/>
    <property type="project" value="UniProtKB-UniRule"/>
</dbReference>
<dbReference type="GO" id="GO:0019509">
    <property type="term" value="P:L-methionine salvage from methylthioadenosine"/>
    <property type="evidence" value="ECO:0007669"/>
    <property type="project" value="UniProtKB-UniRule"/>
</dbReference>
<dbReference type="GO" id="GO:0019284">
    <property type="term" value="P:L-methionine salvage from S-adenosylmethionine"/>
    <property type="evidence" value="ECO:0007669"/>
    <property type="project" value="InterPro"/>
</dbReference>
<dbReference type="CDD" id="cd02232">
    <property type="entry name" value="cupin_ARD"/>
    <property type="match status" value="1"/>
</dbReference>
<dbReference type="Gene3D" id="2.60.120.10">
    <property type="entry name" value="Jelly Rolls"/>
    <property type="match status" value="1"/>
</dbReference>
<dbReference type="HAMAP" id="MF_01682">
    <property type="entry name" value="Salvage_MtnD"/>
    <property type="match status" value="1"/>
</dbReference>
<dbReference type="InterPro" id="IPR004313">
    <property type="entry name" value="ARD"/>
</dbReference>
<dbReference type="InterPro" id="IPR023956">
    <property type="entry name" value="ARD_bac"/>
</dbReference>
<dbReference type="InterPro" id="IPR014710">
    <property type="entry name" value="RmlC-like_jellyroll"/>
</dbReference>
<dbReference type="InterPro" id="IPR011051">
    <property type="entry name" value="RmlC_Cupin_sf"/>
</dbReference>
<dbReference type="PANTHER" id="PTHR23418">
    <property type="entry name" value="ACIREDUCTONE DIOXYGENASE"/>
    <property type="match status" value="1"/>
</dbReference>
<dbReference type="PANTHER" id="PTHR23418:SF0">
    <property type="entry name" value="ACIREDUCTONE DIOXYGENASE"/>
    <property type="match status" value="1"/>
</dbReference>
<dbReference type="Pfam" id="PF03079">
    <property type="entry name" value="ARD"/>
    <property type="match status" value="1"/>
</dbReference>
<dbReference type="SUPFAM" id="SSF51182">
    <property type="entry name" value="RmlC-like cupins"/>
    <property type="match status" value="1"/>
</dbReference>
<reference key="1">
    <citation type="submission" date="2001-04" db="EMBL/GenBank/DDBJ databases">
        <title>Identification of ChpX and ChpY, catalyzing light-dependent CO2 hydration involved in CO2 uptake in Cyanobacteria.</title>
        <authorList>
            <person name="Maeda S."/>
            <person name="Badger M.R."/>
            <person name="Price G.D."/>
        </authorList>
    </citation>
    <scope>NUCLEOTIDE SEQUENCE [GENOMIC DNA]</scope>
</reference>
<reference key="2">
    <citation type="submission" date="2005-08" db="EMBL/GenBank/DDBJ databases">
        <title>Complete sequence of chromosome 1 of Synechococcus elongatus PCC 7942.</title>
        <authorList>
            <consortium name="US DOE Joint Genome Institute"/>
            <person name="Copeland A."/>
            <person name="Lucas S."/>
            <person name="Lapidus A."/>
            <person name="Barry K."/>
            <person name="Detter J.C."/>
            <person name="Glavina T."/>
            <person name="Hammon N."/>
            <person name="Israni S."/>
            <person name="Pitluck S."/>
            <person name="Schmutz J."/>
            <person name="Larimer F."/>
            <person name="Land M."/>
            <person name="Kyrpides N."/>
            <person name="Lykidis A."/>
            <person name="Golden S."/>
            <person name="Richardson P."/>
        </authorList>
    </citation>
    <scope>NUCLEOTIDE SEQUENCE [LARGE SCALE GENOMIC DNA]</scope>
    <source>
        <strain>ATCC 33912 / PCC 7942 / FACHB-805</strain>
    </source>
</reference>
<gene>
    <name evidence="1" type="primary">mtnD</name>
    <name type="ordered locus">Synpcc7942_0608</name>
</gene>
<protein>
    <recommendedName>
        <fullName evidence="1">Acireductone dioxygenase</fullName>
    </recommendedName>
    <alternativeName>
        <fullName evidence="1">1,2-dihydroxy-3-keto-5-methylthiopentene dioxygenase</fullName>
        <shortName evidence="1">DHK-MTPene dioxygenase</shortName>
    </alternativeName>
    <alternativeName>
        <fullName evidence="1">Acireductone dioxygenase (Fe(2+)-requiring)</fullName>
        <shortName evidence="1">ARD'</shortName>
        <shortName evidence="1">Fe-ARD</shortName>
        <ecNumber evidence="1">1.13.11.54</ecNumber>
    </alternativeName>
    <alternativeName>
        <fullName evidence="1">Acireductone dioxygenase (Ni(2+)-requiring)</fullName>
        <shortName evidence="1">ARD</shortName>
        <shortName evidence="1">Ni-ARD</shortName>
        <ecNumber evidence="1">1.13.11.53</ecNumber>
    </alternativeName>
</protein>